<keyword id="KW-0963">Cytoplasm</keyword>
<keyword id="KW-0456">Lyase</keyword>
<accession>Q58Y44</accession>
<organism>
    <name type="scientific">Paracoccus pantotrophus</name>
    <name type="common">Thiosphaera pantotropha</name>
    <dbReference type="NCBI Taxonomy" id="82367"/>
    <lineage>
        <taxon>Bacteria</taxon>
        <taxon>Pseudomonadati</taxon>
        <taxon>Pseudomonadota</taxon>
        <taxon>Alphaproteobacteria</taxon>
        <taxon>Rhodobacterales</taxon>
        <taxon>Paracoccaceae</taxon>
        <taxon>Paracoccus</taxon>
    </lineage>
</organism>
<gene>
    <name type="primary">suyA</name>
</gene>
<proteinExistence type="evidence at protein level"/>
<dbReference type="EC" id="4.4.1.24" evidence="1"/>
<dbReference type="EMBL" id="AY704413">
    <property type="protein sequence ID" value="AAW23058.1"/>
    <property type="molecule type" value="Genomic_DNA"/>
</dbReference>
<dbReference type="SMR" id="Q58Y44"/>
<dbReference type="KEGG" id="ag:AAW23058"/>
<dbReference type="BioCyc" id="MetaCyc:MONOMER-15875"/>
<dbReference type="BRENDA" id="4.4.1.24">
    <property type="organism ID" value="4531"/>
</dbReference>
<dbReference type="GO" id="GO:0005737">
    <property type="term" value="C:cytoplasm"/>
    <property type="evidence" value="ECO:0000314"/>
    <property type="project" value="UniProtKB"/>
</dbReference>
<dbReference type="GO" id="GO:0034010">
    <property type="term" value="F:sulfolactate sulfo-lyase activity"/>
    <property type="evidence" value="ECO:0000314"/>
    <property type="project" value="UniProtKB"/>
</dbReference>
<dbReference type="FunFam" id="2.30.130.110:FF:000003">
    <property type="entry name" value="D-galactarate dehydratase"/>
    <property type="match status" value="1"/>
</dbReference>
<dbReference type="Gene3D" id="2.30.130.110">
    <property type="match status" value="1"/>
</dbReference>
<reference key="1">
    <citation type="journal article" date="2005" name="Microbiology">
        <title>Dissimilation of cysteate via 3-sulfolactate sulfo-lyase and a sulfate exporter in Paracoccus pantotrophus NKNCYSA.</title>
        <authorList>
            <person name="Rein U."/>
            <person name="Gueta R."/>
            <person name="Denger K."/>
            <person name="Ruff J."/>
            <person name="Hollemeyer K."/>
            <person name="Cook A.M."/>
        </authorList>
    </citation>
    <scope>NUCLEOTIDE SEQUENCE [GENOMIC DNA]</scope>
    <scope>FUNCTION</scope>
    <scope>CATALYTIC ACTIVITY</scope>
    <scope>SUBUNIT</scope>
    <scope>SUBCELLULAR LOCATION</scope>
    <source>
        <strain>DSM 12449 / NKNCYSA</strain>
    </source>
</reference>
<protein>
    <recommendedName>
        <fullName>(2R)-sulfolactate sulfo-lyase subunit alpha</fullName>
        <ecNumber evidence="1">4.4.1.24</ecNumber>
    </recommendedName>
    <alternativeName>
        <fullName>Sulfolactate sulfo-lyase A</fullName>
    </alternativeName>
</protein>
<evidence type="ECO:0000269" key="1">
    <source>
    </source>
</evidence>
<evidence type="ECO:0000305" key="2">
    <source>
    </source>
</evidence>
<comment type="function">
    <text evidence="1">Together with SuyB, desulfonates sulfolactate to pyruvate and sulfite.</text>
</comment>
<comment type="catalytic activity">
    <reaction evidence="1">
        <text>(2R)-3-sulfolactate = sulfite + pyruvate + H(+)</text>
        <dbReference type="Rhea" id="RHEA:21428"/>
        <dbReference type="ChEBI" id="CHEBI:15361"/>
        <dbReference type="ChEBI" id="CHEBI:15378"/>
        <dbReference type="ChEBI" id="CHEBI:17359"/>
        <dbReference type="ChEBI" id="CHEBI:58738"/>
        <dbReference type="EC" id="4.4.1.24"/>
    </reaction>
</comment>
<comment type="subunit">
    <text evidence="2">(2R)-sulfolactate sulfo-lyase is composed of a SuyA and a SuyB subunit.</text>
</comment>
<comment type="subcellular location">
    <subcellularLocation>
        <location evidence="2">Cytoplasm</location>
    </subcellularLocation>
</comment>
<feature type="chain" id="PRO_0000418742" description="(2R)-sulfolactate sulfo-lyase subunit alpha">
    <location>
        <begin position="1"/>
        <end position="67"/>
    </location>
</feature>
<sequence length="67" mass="7328">MLCVVTSDNSDFRLTAKADIPIGHKVALKALKAGDTVIKYHEDIGKMVGDAEVGGHVHTHNCKTKRW</sequence>
<name>SUYA_PARPN</name>